<feature type="chain" id="PRO_0000118018" description="NAD(P)H-quinone oxidoreductase chain 4, chloroplastic">
    <location>
        <begin position="1"/>
        <end position="499"/>
    </location>
</feature>
<feature type="transmembrane region" description="Helical" evidence="1">
    <location>
        <begin position="4"/>
        <end position="24"/>
    </location>
</feature>
<feature type="transmembrane region" description="Helical" evidence="1">
    <location>
        <begin position="31"/>
        <end position="51"/>
    </location>
</feature>
<feature type="transmembrane region" description="Helical" evidence="1">
    <location>
        <begin position="87"/>
        <end position="107"/>
    </location>
</feature>
<feature type="transmembrane region" description="Helical" evidence="1">
    <location>
        <begin position="113"/>
        <end position="133"/>
    </location>
</feature>
<feature type="transmembrane region" description="Helical" evidence="1">
    <location>
        <begin position="134"/>
        <end position="154"/>
    </location>
</feature>
<feature type="transmembrane region" description="Helical" evidence="1">
    <location>
        <begin position="167"/>
        <end position="187"/>
    </location>
</feature>
<feature type="transmembrane region" description="Helical" evidence="1">
    <location>
        <begin position="211"/>
        <end position="231"/>
    </location>
</feature>
<feature type="transmembrane region" description="Helical" evidence="1">
    <location>
        <begin position="242"/>
        <end position="262"/>
    </location>
</feature>
<feature type="transmembrane region" description="Helical" evidence="1">
    <location>
        <begin position="274"/>
        <end position="294"/>
    </location>
</feature>
<feature type="transmembrane region" description="Helical" evidence="1">
    <location>
        <begin position="310"/>
        <end position="330"/>
    </location>
</feature>
<feature type="transmembrane region" description="Helical" evidence="1">
    <location>
        <begin position="331"/>
        <end position="351"/>
    </location>
</feature>
<feature type="transmembrane region" description="Helical" evidence="1">
    <location>
        <begin position="385"/>
        <end position="405"/>
    </location>
</feature>
<feature type="transmembrane region" description="Helical" evidence="1">
    <location>
        <begin position="416"/>
        <end position="436"/>
    </location>
</feature>
<feature type="transmembrane region" description="Helical" evidence="1">
    <location>
        <begin position="462"/>
        <end position="482"/>
    </location>
</feature>
<reference key="1">
    <citation type="journal article" date="1986" name="Nature">
        <title>Chloroplast gene organization deduced from complete sequence of liverwort Marchantia polymorpha chloroplast DNA.</title>
        <authorList>
            <person name="Ohyama K."/>
            <person name="Fukuzawa H."/>
            <person name="Kohchi T."/>
            <person name="Shirai H."/>
            <person name="Sano T."/>
            <person name="Sano S."/>
            <person name="Umesono K."/>
            <person name="Shiki Y."/>
            <person name="Takeuchi M."/>
            <person name="Chang Z."/>
            <person name="Aota S."/>
            <person name="Inokuchi H."/>
            <person name="Ozeki H."/>
        </authorList>
    </citation>
    <scope>NUCLEOTIDE SEQUENCE [LARGE SCALE GENOMIC DNA]</scope>
</reference>
<reference key="2">
    <citation type="journal article" date="1988" name="J. Mol. Biol.">
        <title>Structure and organization of Marchantia polymorpha chloroplast genome. IV. Inverted repeat and small single copy regions.</title>
        <authorList>
            <person name="Kohchi T."/>
            <person name="Shirai H."/>
            <person name="Fukuzawa H."/>
            <person name="Sano T."/>
            <person name="Komano T."/>
            <person name="Umesono K."/>
            <person name="Inokuchi H."/>
            <person name="Ozeki H."/>
            <person name="Ohyama K."/>
        </authorList>
    </citation>
    <scope>NUCLEOTIDE SEQUENCE [GENOMIC DNA]</scope>
</reference>
<comment type="catalytic activity">
    <reaction>
        <text>a plastoquinone + NADH + (n+1) H(+)(in) = a plastoquinol + NAD(+) + n H(+)(out)</text>
        <dbReference type="Rhea" id="RHEA:42608"/>
        <dbReference type="Rhea" id="RHEA-COMP:9561"/>
        <dbReference type="Rhea" id="RHEA-COMP:9562"/>
        <dbReference type="ChEBI" id="CHEBI:15378"/>
        <dbReference type="ChEBI" id="CHEBI:17757"/>
        <dbReference type="ChEBI" id="CHEBI:57540"/>
        <dbReference type="ChEBI" id="CHEBI:57945"/>
        <dbReference type="ChEBI" id="CHEBI:62192"/>
    </reaction>
</comment>
<comment type="catalytic activity">
    <reaction>
        <text>a plastoquinone + NADPH + (n+1) H(+)(in) = a plastoquinol + NADP(+) + n H(+)(out)</text>
        <dbReference type="Rhea" id="RHEA:42612"/>
        <dbReference type="Rhea" id="RHEA-COMP:9561"/>
        <dbReference type="Rhea" id="RHEA-COMP:9562"/>
        <dbReference type="ChEBI" id="CHEBI:15378"/>
        <dbReference type="ChEBI" id="CHEBI:17757"/>
        <dbReference type="ChEBI" id="CHEBI:57783"/>
        <dbReference type="ChEBI" id="CHEBI:58349"/>
        <dbReference type="ChEBI" id="CHEBI:62192"/>
    </reaction>
</comment>
<comment type="subcellular location">
    <subcellularLocation>
        <location evidence="2">Plastid</location>
        <location evidence="2">Chloroplast thylakoid membrane</location>
        <topology evidence="2">Multi-pass membrane protein</topology>
    </subcellularLocation>
</comment>
<comment type="similarity">
    <text evidence="2">Belongs to the complex I subunit 4 family.</text>
</comment>
<accession>P06263</accession>
<protein>
    <recommendedName>
        <fullName>NAD(P)H-quinone oxidoreductase chain 4, chloroplastic</fullName>
        <ecNumber>7.1.1.-</ecNumber>
    </recommendedName>
    <alternativeName>
        <fullName>NAD(P)H dehydrogenase, chain 4</fullName>
    </alternativeName>
    <alternativeName>
        <fullName>NADH-plastoquinone oxidoreductase chain 4</fullName>
    </alternativeName>
</protein>
<geneLocation type="chloroplast"/>
<name>NU4C_MARPO</name>
<proteinExistence type="inferred from homology"/>
<keyword id="KW-0150">Chloroplast</keyword>
<keyword id="KW-0472">Membrane</keyword>
<keyword id="KW-0520">NAD</keyword>
<keyword id="KW-0521">NADP</keyword>
<keyword id="KW-0934">Plastid</keyword>
<keyword id="KW-0618">Plastoquinone</keyword>
<keyword id="KW-0874">Quinone</keyword>
<keyword id="KW-0793">Thylakoid</keyword>
<keyword id="KW-1278">Translocase</keyword>
<keyword id="KW-0812">Transmembrane</keyword>
<keyword id="KW-1133">Transmembrane helix</keyword>
<gene>
    <name type="primary">ndhD</name>
    <name type="synonym">ndh4</name>
</gene>
<organism>
    <name type="scientific">Marchantia polymorpha</name>
    <name type="common">Common liverwort</name>
    <name type="synonym">Marchantia aquatica</name>
    <dbReference type="NCBI Taxonomy" id="3197"/>
    <lineage>
        <taxon>Eukaryota</taxon>
        <taxon>Viridiplantae</taxon>
        <taxon>Streptophyta</taxon>
        <taxon>Embryophyta</taxon>
        <taxon>Marchantiophyta</taxon>
        <taxon>Marchantiopsida</taxon>
        <taxon>Marchantiidae</taxon>
        <taxon>Marchantiales</taxon>
        <taxon>Marchantiaceae</taxon>
        <taxon>Marchantia</taxon>
    </lineage>
</organism>
<dbReference type="EC" id="7.1.1.-"/>
<dbReference type="EMBL" id="X04465">
    <property type="protein sequence ID" value="CAA28134.1"/>
    <property type="molecule type" value="Genomic_DNA"/>
</dbReference>
<dbReference type="PIR" id="A00445">
    <property type="entry name" value="DELVN4"/>
</dbReference>
<dbReference type="RefSeq" id="NP_039348.1">
    <property type="nucleotide sequence ID" value="NC_001319.1"/>
</dbReference>
<dbReference type="SMR" id="P06263"/>
<dbReference type="GeneID" id="2702577"/>
<dbReference type="GO" id="GO:0009535">
    <property type="term" value="C:chloroplast thylakoid membrane"/>
    <property type="evidence" value="ECO:0007669"/>
    <property type="project" value="UniProtKB-SubCell"/>
</dbReference>
<dbReference type="GO" id="GO:0008137">
    <property type="term" value="F:NADH dehydrogenase (ubiquinone) activity"/>
    <property type="evidence" value="ECO:0007669"/>
    <property type="project" value="InterPro"/>
</dbReference>
<dbReference type="GO" id="GO:0048038">
    <property type="term" value="F:quinone binding"/>
    <property type="evidence" value="ECO:0007669"/>
    <property type="project" value="UniProtKB-KW"/>
</dbReference>
<dbReference type="GO" id="GO:0042773">
    <property type="term" value="P:ATP synthesis coupled electron transport"/>
    <property type="evidence" value="ECO:0007669"/>
    <property type="project" value="InterPro"/>
</dbReference>
<dbReference type="HAMAP" id="MF_00491">
    <property type="entry name" value="NDH1_NuoM"/>
    <property type="match status" value="1"/>
</dbReference>
<dbReference type="InterPro" id="IPR022997">
    <property type="entry name" value="NADH_Q_OxRdtase_chain4"/>
</dbReference>
<dbReference type="InterPro" id="IPR010227">
    <property type="entry name" value="NADH_Q_OxRdtase_chainM/4"/>
</dbReference>
<dbReference type="InterPro" id="IPR003918">
    <property type="entry name" value="NADH_UbQ_OxRdtase"/>
</dbReference>
<dbReference type="InterPro" id="IPR001750">
    <property type="entry name" value="ND/Mrp_TM"/>
</dbReference>
<dbReference type="NCBIfam" id="TIGR01972">
    <property type="entry name" value="NDH_I_M"/>
    <property type="match status" value="1"/>
</dbReference>
<dbReference type="NCBIfam" id="NF009212">
    <property type="entry name" value="PRK12561.1"/>
    <property type="match status" value="1"/>
</dbReference>
<dbReference type="PANTHER" id="PTHR43507:SF21">
    <property type="entry name" value="NAD(P)H-QUINONE OXIDOREDUCTASE CHAIN 4, CHLOROPLASTIC"/>
    <property type="match status" value="1"/>
</dbReference>
<dbReference type="PANTHER" id="PTHR43507">
    <property type="entry name" value="NADH-UBIQUINONE OXIDOREDUCTASE CHAIN 4"/>
    <property type="match status" value="1"/>
</dbReference>
<dbReference type="Pfam" id="PF00361">
    <property type="entry name" value="Proton_antipo_M"/>
    <property type="match status" value="1"/>
</dbReference>
<dbReference type="PRINTS" id="PR01437">
    <property type="entry name" value="NUOXDRDTASE4"/>
</dbReference>
<evidence type="ECO:0000255" key="1"/>
<evidence type="ECO:0000305" key="2"/>
<sequence>MNHFPWLTIIVLFPISAGLVIPFLPSTGNKIIRWYTLGVCLLEFLLITYIFCYHYQFNDHLIQLKEDYNWISFINFHWRLGIDGFSIGLILLTGFITTLATLAAWPVTRNPRLFYFLMLAMYSGQIGLFASQDILLFFFMWELELLPVYLLLAMWGGKRRLYAATKFILYTAAGSLFILIGGLIMAFYNSNEFTFDFQFLINKKYPLELEIIIYLSFLIAYAVKLPIIPFHTWLPDTHGEAHYSTCMLLAGILLKMGAYGLIRINMELLPHAHSFFAPWLVIVGAIQIVYAALTSLSQRNLKRRIAYSSVSHMGFVLIGIGSITNLGLNGAILQMISHGLIGASLFFLAGISYDRTRTLVLDQMGGIGNSMPKIFTLFTSCSMASLALPGMSGFIAELMIFLGVIDNPNYSSLFKIIIIIIQGIGIILTPIYLLSMLRQMFYGYKFSNTLEPYFMDAGPREIFILICLFFPIISIGIYPNFVLSIWNSKVNFLLSNNFF</sequence>